<proteinExistence type="evidence at transcript level"/>
<reference key="1">
    <citation type="journal article" date="2004" name="Genome Res.">
        <title>The status, quality, and expansion of the NIH full-length cDNA project: the Mammalian Gene Collection (MGC).</title>
        <authorList>
            <consortium name="The MGC Project Team"/>
        </authorList>
    </citation>
    <scope>NUCLEOTIDE SEQUENCE [LARGE SCALE MRNA]</scope>
    <source>
        <tissue>Testis</tissue>
    </source>
</reference>
<reference key="2">
    <citation type="journal article" date="2000" name="Biochem. Biophys. Res. Commun.">
        <title>Involvement of hrs binding protein in IgE receptor-triggered exocytosis in RBL-2H3 mast cells.</title>
        <authorList>
            <person name="Murai S."/>
            <person name="Kitamura N."/>
        </authorList>
    </citation>
    <scope>FUNCTION</scope>
</reference>
<keyword id="KW-0963">Cytoplasm</keyword>
<keyword id="KW-0967">Endosome</keyword>
<keyword id="KW-0472">Membrane</keyword>
<keyword id="KW-0597">Phosphoprotein</keyword>
<keyword id="KW-0653">Protein transport</keyword>
<keyword id="KW-1185">Reference proteome</keyword>
<keyword id="KW-0728">SH3 domain</keyword>
<keyword id="KW-0813">Transport</keyword>
<gene>
    <name type="primary">Stam2</name>
</gene>
<dbReference type="EMBL" id="BC083912">
    <property type="protein sequence ID" value="AAH83912.1"/>
    <property type="molecule type" value="mRNA"/>
</dbReference>
<dbReference type="RefSeq" id="NP_001012085.1">
    <property type="nucleotide sequence ID" value="NM_001012085.1"/>
</dbReference>
<dbReference type="BMRB" id="Q5XHY7"/>
<dbReference type="SMR" id="Q5XHY7"/>
<dbReference type="FunCoup" id="Q5XHY7">
    <property type="interactions" value="4164"/>
</dbReference>
<dbReference type="STRING" id="10116.ENSRNOP00000033318"/>
<dbReference type="PhosphoSitePlus" id="Q5XHY7"/>
<dbReference type="jPOST" id="Q5XHY7"/>
<dbReference type="PaxDb" id="10116-ENSRNOP00000033318"/>
<dbReference type="Ensembl" id="ENSRNOT00000115523.1">
    <property type="protein sequence ID" value="ENSRNOP00000080484.1"/>
    <property type="gene ID" value="ENSRNOG00000027447.7"/>
</dbReference>
<dbReference type="GeneID" id="311030"/>
<dbReference type="KEGG" id="rno:311030"/>
<dbReference type="UCSC" id="RGD:1311497">
    <property type="organism name" value="rat"/>
</dbReference>
<dbReference type="AGR" id="RGD:1311497"/>
<dbReference type="CTD" id="10254"/>
<dbReference type="RGD" id="1311497">
    <property type="gene designation" value="Stam2"/>
</dbReference>
<dbReference type="eggNOG" id="KOG2199">
    <property type="taxonomic scope" value="Eukaryota"/>
</dbReference>
<dbReference type="GeneTree" id="ENSGT00940000157055"/>
<dbReference type="HOGENOM" id="CLU_010104_0_0_1"/>
<dbReference type="InParanoid" id="Q5XHY7"/>
<dbReference type="OrthoDB" id="26474at9989"/>
<dbReference type="PhylomeDB" id="Q5XHY7"/>
<dbReference type="TreeFam" id="TF315007"/>
<dbReference type="Reactome" id="R-RNO-182971">
    <property type="pathway name" value="EGFR downregulation"/>
</dbReference>
<dbReference type="Reactome" id="R-RNO-5689880">
    <property type="pathway name" value="Ub-specific processing proteases"/>
</dbReference>
<dbReference type="Reactome" id="R-RNO-6807004">
    <property type="pathway name" value="Negative regulation of MET activity"/>
</dbReference>
<dbReference type="Reactome" id="R-RNO-8856825">
    <property type="pathway name" value="Cargo recognition for clathrin-mediated endocytosis"/>
</dbReference>
<dbReference type="Reactome" id="R-RNO-8856828">
    <property type="pathway name" value="Clathrin-mediated endocytosis"/>
</dbReference>
<dbReference type="Reactome" id="R-RNO-9013420">
    <property type="pathway name" value="RHOU GTPase cycle"/>
</dbReference>
<dbReference type="Reactome" id="R-RNO-917729">
    <property type="pathway name" value="Endosomal Sorting Complex Required For Transport (ESCRT)"/>
</dbReference>
<dbReference type="PRO" id="PR:Q5XHY7"/>
<dbReference type="Proteomes" id="UP000002494">
    <property type="component" value="Chromosome 3"/>
</dbReference>
<dbReference type="Bgee" id="ENSRNOG00000027447">
    <property type="expression patterns" value="Expressed in testis and 18 other cell types or tissues"/>
</dbReference>
<dbReference type="GO" id="GO:0031901">
    <property type="term" value="C:early endosome membrane"/>
    <property type="evidence" value="ECO:0007669"/>
    <property type="project" value="UniProtKB-SubCell"/>
</dbReference>
<dbReference type="GO" id="GO:0030139">
    <property type="term" value="C:endocytic vesicle"/>
    <property type="evidence" value="ECO:0000318"/>
    <property type="project" value="GO_Central"/>
</dbReference>
<dbReference type="GO" id="GO:0035091">
    <property type="term" value="F:phosphatidylinositol binding"/>
    <property type="evidence" value="ECO:0007669"/>
    <property type="project" value="InterPro"/>
</dbReference>
<dbReference type="GO" id="GO:0043130">
    <property type="term" value="F:ubiquitin binding"/>
    <property type="evidence" value="ECO:0007669"/>
    <property type="project" value="InterPro"/>
</dbReference>
<dbReference type="GO" id="GO:0015031">
    <property type="term" value="P:protein transport"/>
    <property type="evidence" value="ECO:0007669"/>
    <property type="project" value="UniProtKB-KW"/>
</dbReference>
<dbReference type="GO" id="GO:0007165">
    <property type="term" value="P:signal transduction"/>
    <property type="evidence" value="ECO:0000318"/>
    <property type="project" value="GO_Central"/>
</dbReference>
<dbReference type="CDD" id="cd21390">
    <property type="entry name" value="GAT_STAM2"/>
    <property type="match status" value="1"/>
</dbReference>
<dbReference type="CDD" id="cd11963">
    <property type="entry name" value="SH3_STAM2"/>
    <property type="match status" value="1"/>
</dbReference>
<dbReference type="CDD" id="cd16999">
    <property type="entry name" value="VHS_STAM2"/>
    <property type="match status" value="1"/>
</dbReference>
<dbReference type="FunFam" id="1.25.40.90:FF:000009">
    <property type="entry name" value="Putative signal transducing adapter molecule 1"/>
    <property type="match status" value="1"/>
</dbReference>
<dbReference type="FunFam" id="1.20.5.1940:FF:000002">
    <property type="entry name" value="Signal transducing adapter molecule 1"/>
    <property type="match status" value="1"/>
</dbReference>
<dbReference type="FunFam" id="2.30.30.40:FF:000086">
    <property type="entry name" value="signal transducing adapter molecule 2"/>
    <property type="match status" value="1"/>
</dbReference>
<dbReference type="Gene3D" id="1.20.5.1940">
    <property type="match status" value="1"/>
</dbReference>
<dbReference type="Gene3D" id="1.25.40.90">
    <property type="match status" value="1"/>
</dbReference>
<dbReference type="Gene3D" id="2.30.30.40">
    <property type="entry name" value="SH3 Domains"/>
    <property type="match status" value="1"/>
</dbReference>
<dbReference type="InterPro" id="IPR008942">
    <property type="entry name" value="ENTH_VHS"/>
</dbReference>
<dbReference type="InterPro" id="IPR036028">
    <property type="entry name" value="SH3-like_dom_sf"/>
</dbReference>
<dbReference type="InterPro" id="IPR001452">
    <property type="entry name" value="SH3_domain"/>
</dbReference>
<dbReference type="InterPro" id="IPR050670">
    <property type="entry name" value="STAM"/>
</dbReference>
<dbReference type="InterPro" id="IPR035675">
    <property type="entry name" value="STAM2_SH3"/>
</dbReference>
<dbReference type="InterPro" id="IPR003903">
    <property type="entry name" value="UIM_dom"/>
</dbReference>
<dbReference type="InterPro" id="IPR002014">
    <property type="entry name" value="VHS_dom"/>
</dbReference>
<dbReference type="InterPro" id="IPR047493">
    <property type="entry name" value="VHS_STAM2"/>
</dbReference>
<dbReference type="PANTHER" id="PTHR45929:SF1">
    <property type="entry name" value="HEMATOPOIETIC LINEAGE CELL-SPECIFIC PROTEIN-RELATED"/>
    <property type="match status" value="1"/>
</dbReference>
<dbReference type="PANTHER" id="PTHR45929">
    <property type="entry name" value="JAK PATHWAY SIGNAL TRANSDUCTION ADAPTOR MOLECULE"/>
    <property type="match status" value="1"/>
</dbReference>
<dbReference type="Pfam" id="PF00018">
    <property type="entry name" value="SH3_1"/>
    <property type="match status" value="1"/>
</dbReference>
<dbReference type="Pfam" id="PF02809">
    <property type="entry name" value="UIM"/>
    <property type="match status" value="1"/>
</dbReference>
<dbReference type="Pfam" id="PF00790">
    <property type="entry name" value="VHS"/>
    <property type="match status" value="1"/>
</dbReference>
<dbReference type="PRINTS" id="PR00499">
    <property type="entry name" value="P67PHOX"/>
</dbReference>
<dbReference type="PRINTS" id="PR00452">
    <property type="entry name" value="SH3DOMAIN"/>
</dbReference>
<dbReference type="SMART" id="SM00326">
    <property type="entry name" value="SH3"/>
    <property type="match status" value="1"/>
</dbReference>
<dbReference type="SMART" id="SM00726">
    <property type="entry name" value="UIM"/>
    <property type="match status" value="1"/>
</dbReference>
<dbReference type="SMART" id="SM00288">
    <property type="entry name" value="VHS"/>
    <property type="match status" value="1"/>
</dbReference>
<dbReference type="SUPFAM" id="SSF48464">
    <property type="entry name" value="ENTH/VHS domain"/>
    <property type="match status" value="1"/>
</dbReference>
<dbReference type="SUPFAM" id="SSF50044">
    <property type="entry name" value="SH3-domain"/>
    <property type="match status" value="1"/>
</dbReference>
<dbReference type="PROSITE" id="PS50002">
    <property type="entry name" value="SH3"/>
    <property type="match status" value="1"/>
</dbReference>
<dbReference type="PROSITE" id="PS50330">
    <property type="entry name" value="UIM"/>
    <property type="match status" value="1"/>
</dbReference>
<dbReference type="PROSITE" id="PS50179">
    <property type="entry name" value="VHS"/>
    <property type="match status" value="1"/>
</dbReference>
<accession>Q5XHY7</accession>
<protein>
    <recommendedName>
        <fullName>Signal transducing adapter molecule 2</fullName>
        <shortName>STAM-2</shortName>
    </recommendedName>
</protein>
<evidence type="ECO:0000250" key="1"/>
<evidence type="ECO:0000250" key="2">
    <source>
        <dbReference type="UniProtKB" id="O75886"/>
    </source>
</evidence>
<evidence type="ECO:0000250" key="3">
    <source>
        <dbReference type="UniProtKB" id="O88811"/>
    </source>
</evidence>
<evidence type="ECO:0000255" key="4">
    <source>
        <dbReference type="PROSITE-ProRule" id="PRU00192"/>
    </source>
</evidence>
<evidence type="ECO:0000255" key="5">
    <source>
        <dbReference type="PROSITE-ProRule" id="PRU00213"/>
    </source>
</evidence>
<evidence type="ECO:0000255" key="6">
    <source>
        <dbReference type="PROSITE-ProRule" id="PRU00218"/>
    </source>
</evidence>
<evidence type="ECO:0000269" key="7">
    <source>
    </source>
</evidence>
<evidence type="ECO:0000305" key="8"/>
<comment type="function">
    <text evidence="1 7">Involved in intracellular signal transduction mediated by cytokines and growth factors. Upon IL-2 and GM-CSL stimulation, it plays a role in signaling leading to DNA synthesis and MYC induction. May also play a role in T-cell development. Involved in down-regulation of receptor tyrosine kinase via multivesicular body (MVBs) when complexed with HGS (ESCRT-0 complex). The ESCRT-0 complex binds ubiquitin and acts as a sorting machinery that recognizes ubiquitinated receptors and transfers them to further sequential lysosomal sorting/trafficking processes (By similarity).</text>
</comment>
<comment type="subunit">
    <text evidence="2 3">Component of the ESCRT-0 complex composed of STAM or STAM2 and HGS. Part of a complex at least composed of HSG, STAM2 and EPS15. Interacts with JAK2 and JAK3. Interacts with ubiquitinated proteins and the deubiquitinating enzyme USP8/UBPY. Interacts (via the via the PxVxL motif) with CBX5; the interaction is direct. Interacts with VPS37C. Interacts with ubiquitin; the interaction is direct. Interacts (via UIM domain) with UBQLN1 (via ubiquitin-like domain) (By similarity).</text>
</comment>
<comment type="subcellular location">
    <subcellularLocation>
        <location evidence="1">Cytoplasm</location>
    </subcellularLocation>
    <subcellularLocation>
        <location evidence="1">Early endosome membrane</location>
        <topology evidence="1">Peripheral membrane protein</topology>
        <orientation evidence="1">Cytoplasmic side</orientation>
    </subcellularLocation>
</comment>
<comment type="domain">
    <text>Contains one Pro-Xaa-Val-Xaa-Leu (PxVxL) motif, which is required for interaction with chromoshadow domains. This motif requires additional residues -7, -6, +4 and +5 of the central Val which contact the chromoshadow domain.</text>
</comment>
<comment type="PTM">
    <text evidence="1">Phosphorylated.</text>
</comment>
<comment type="similarity">
    <text evidence="8">Belongs to the STAM family.</text>
</comment>
<feature type="chain" id="PRO_0000190149" description="Signal transducing adapter molecule 2">
    <location>
        <begin position="1"/>
        <end position="523"/>
    </location>
</feature>
<feature type="domain" description="VHS" evidence="6">
    <location>
        <begin position="16"/>
        <end position="144"/>
    </location>
</feature>
<feature type="domain" description="UIM" evidence="5">
    <location>
        <begin position="165"/>
        <end position="184"/>
    </location>
</feature>
<feature type="domain" description="SH3" evidence="4">
    <location>
        <begin position="202"/>
        <end position="261"/>
    </location>
</feature>
<feature type="domain" description="ITAM">
    <location>
        <begin position="360"/>
        <end position="377"/>
    </location>
</feature>
<feature type="region of interest" description="Interaction with USP8" evidence="1">
    <location>
        <begin position="219"/>
        <end position="220"/>
    </location>
</feature>
<feature type="region of interest" description="Interaction with HGS" evidence="1">
    <location>
        <begin position="334"/>
        <end position="368"/>
    </location>
</feature>
<feature type="short sequence motif" description="PxVxL motif">
    <location>
        <begin position="54"/>
        <end position="67"/>
    </location>
</feature>
<sequence length="523" mass="57159">MPLFTANPFEQDVEKATNEYNTTEDWSLIMDICDRVGSTPNGAKDCLKAIMKRVNHKVPHVALQALTLLGACVANCGKIFHLEVCSRDFATEVRAVIKNKAHPKVCEKLKSLMVEWSEEFQKDPQFSLISATIKAMKEEGVTFPSAGSQTVSAAAKNGASLNKNKEDEDIAKAIELSLQEQKQQYPETKALCPPAESQLSNKVARRVRALYDFEAVEDNELTFKHGEIITVLDDSDANWWEGENHRGAGLFPSSFVTTDLSTEVEAATVDKSNVIDDDVEEIKKSEPEPVYIDEGKMDRALQILQSIDPKDPKPDSQDLLDLEDICQQMGPMIDEKLEEIDRRHSELSELNVKVLEALELYNKLVNEAPMYSVYSKLHPAPYSATAAGVPVQTYPVQSHGGNYLGHGIHQVPVAQSYNLGPDPMGSSRSLPPNMNSVTAHTIQPPYLSTGQDAVSNPSYMTQSSHLQAAAGTAAYTPAMGVSADLSSFQSTASGLPQLAGFPVAVPVPPAPQPQASYHQQPLL</sequence>
<organism>
    <name type="scientific">Rattus norvegicus</name>
    <name type="common">Rat</name>
    <dbReference type="NCBI Taxonomy" id="10116"/>
    <lineage>
        <taxon>Eukaryota</taxon>
        <taxon>Metazoa</taxon>
        <taxon>Chordata</taxon>
        <taxon>Craniata</taxon>
        <taxon>Vertebrata</taxon>
        <taxon>Euteleostomi</taxon>
        <taxon>Mammalia</taxon>
        <taxon>Eutheria</taxon>
        <taxon>Euarchontoglires</taxon>
        <taxon>Glires</taxon>
        <taxon>Rodentia</taxon>
        <taxon>Myomorpha</taxon>
        <taxon>Muroidea</taxon>
        <taxon>Muridae</taxon>
        <taxon>Murinae</taxon>
        <taxon>Rattus</taxon>
    </lineage>
</organism>
<name>STAM2_RAT</name>